<proteinExistence type="evidence at protein level"/>
<comment type="function">
    <text evidence="5 7">Anchoring protein that binds preferentially to the type I regulatory subunit of c-AMP-dependent protein kinase (PKA type I) and targets it to distinct subcellular compartments. May act as a converging factor linking cAMP and sphingosine signaling pathways. Plays a regulatory role in the modulation of SPHK1.</text>
</comment>
<comment type="subunit">
    <text evidence="5 7">Interacts (via the PKA-RII subunit binding domain) with the RI subunit of PKA. Interacts with SPHK1; the interaction greatly reduces SPHK1 activity.</text>
</comment>
<comment type="interaction">
    <interactant intactId="EBI-1803914">
        <id>Q2M3C7</id>
    </interactant>
    <interactant intactId="EBI-985303">
        <id>Q9NYA1</id>
        <label>SPHK1</label>
    </interactant>
    <organismsDiffer>false</organismsDiffer>
    <experiments>4</experiments>
</comment>
<comment type="subcellular location">
    <subcellularLocation>
        <location evidence="5 7">Cytoplasm</location>
    </subcellularLocation>
    <text>Colocalizes with SPHK1 in the cytoplasm.</text>
</comment>
<comment type="alternative products">
    <event type="alternative splicing"/>
    <isoform>
        <id>Q2M3C7-1</id>
        <name>1</name>
        <sequence type="displayed"/>
    </isoform>
    <isoform>
        <id>Q2M3C7-2</id>
        <name>2</name>
        <sequence type="described" ref="VSP_031712"/>
    </isoform>
</comment>
<comment type="tissue specificity">
    <text evidence="5 7">Highly expressed in heart. Both isoforms abundantly expressed in ventricle. Also expressed in spleen, ovary and brain.</text>
</comment>
<comment type="domain">
    <text evidence="1">RII-binding site, predicted to form an amphipathic helix, could participate in protein-protein interactions with a complementary surface on the R-subunit dimer.</text>
</comment>
<comment type="similarity">
    <text evidence="10">Belongs to the AKAP110 family.</text>
</comment>
<comment type="sequence caution" evidence="10">
    <conflict type="erroneous initiation">
        <sequence resource="EMBL-CDS" id="CAH18152"/>
    </conflict>
    <text>Truncated N-terminus.</text>
</comment>
<organism>
    <name type="scientific">Homo sapiens</name>
    <name type="common">Human</name>
    <dbReference type="NCBI Taxonomy" id="9606"/>
    <lineage>
        <taxon>Eukaryota</taxon>
        <taxon>Metazoa</taxon>
        <taxon>Chordata</taxon>
        <taxon>Craniata</taxon>
        <taxon>Vertebrata</taxon>
        <taxon>Euteleostomi</taxon>
        <taxon>Mammalia</taxon>
        <taxon>Eutheria</taxon>
        <taxon>Euarchontoglires</taxon>
        <taxon>Primates</taxon>
        <taxon>Haplorrhini</taxon>
        <taxon>Catarrhini</taxon>
        <taxon>Hominidae</taxon>
        <taxon>Homo</taxon>
    </lineage>
</organism>
<evidence type="ECO:0000250" key="1"/>
<evidence type="ECO:0000250" key="2">
    <source>
        <dbReference type="UniProtKB" id="Q6NSW3"/>
    </source>
</evidence>
<evidence type="ECO:0000256" key="3">
    <source>
        <dbReference type="SAM" id="MobiDB-lite"/>
    </source>
</evidence>
<evidence type="ECO:0000269" key="4">
    <source>
    </source>
</evidence>
<evidence type="ECO:0000269" key="5">
    <source>
    </source>
</evidence>
<evidence type="ECO:0000269" key="6">
    <source>
    </source>
</evidence>
<evidence type="ECO:0000269" key="7">
    <source>
    </source>
</evidence>
<evidence type="ECO:0000303" key="8">
    <source>
    </source>
</evidence>
<evidence type="ECO:0000303" key="9">
    <source>
    </source>
</evidence>
<evidence type="ECO:0000305" key="10"/>
<reference key="1">
    <citation type="journal article" date="2007" name="BMC Genomics">
        <title>The full-ORF clone resource of the German cDNA consortium.</title>
        <authorList>
            <person name="Bechtel S."/>
            <person name="Rosenfelder H."/>
            <person name="Duda A."/>
            <person name="Schmidt C.P."/>
            <person name="Ernst U."/>
            <person name="Wellenreuther R."/>
            <person name="Mehrle A."/>
            <person name="Schuster C."/>
            <person name="Bahr A."/>
            <person name="Bloecker H."/>
            <person name="Heubner D."/>
            <person name="Hoerlein A."/>
            <person name="Michel G."/>
            <person name="Wedler H."/>
            <person name="Koehrer K."/>
            <person name="Ottenwaelder B."/>
            <person name="Poustka A."/>
            <person name="Wiemann S."/>
            <person name="Schupp I."/>
        </authorList>
    </citation>
    <scope>NUCLEOTIDE SEQUENCE [LARGE SCALE MRNA] (ISOFORM 2)</scope>
    <scope>NUCLEOTIDE SEQUENCE [LARGE SCALE MRNA] OF 284-1700 (ISOFORM 1)</scope>
    <scope>VARIANTS GLU-617 AND GLN-847</scope>
    <source>
        <tissue>Amygdala</tissue>
    </source>
</reference>
<reference key="2">
    <citation type="journal article" date="2004" name="Genome Res.">
        <title>The status, quality, and expansion of the NIH full-length cDNA project: the Mammalian Gene Collection (MGC).</title>
        <authorList>
            <consortium name="The MGC Project Team"/>
        </authorList>
    </citation>
    <scope>NUCLEOTIDE SEQUENCE [LARGE SCALE MRNA] (ISOFORM 1)</scope>
    <source>
        <tissue>Brain</tissue>
    </source>
</reference>
<reference key="3">
    <citation type="journal article" date="2000" name="DNA Res.">
        <title>Prediction of the coding sequences of unidentified human genes. XIX. The complete sequences of 100 new cDNA clones from brain which code for large proteins in vitro.</title>
        <authorList>
            <person name="Nagase T."/>
            <person name="Kikuno R."/>
            <person name="Hattori A."/>
            <person name="Kondo Y."/>
            <person name="Okumura K."/>
            <person name="Ohara O."/>
        </authorList>
    </citation>
    <scope>NUCLEOTIDE SEQUENCE [LARGE SCALE MRNA] OF 370-1700 (ISOFORM 2)</scope>
    <scope>VARIANTS GLU-617 AND GLN-847</scope>
    <source>
        <tissue>Brain</tissue>
    </source>
</reference>
<reference key="4">
    <citation type="journal article" date="2002" name="J. Biol. Chem.">
        <title>Cloning and characterization of a protein kinase A anchoring protein (AKAP)-related protein that interacts with and regulates sphingosine kinase 1 activity.</title>
        <authorList>
            <person name="Lacana E."/>
            <person name="Maceyka M."/>
            <person name="Milstien S."/>
            <person name="Spiegel S."/>
        </authorList>
    </citation>
    <scope>FUNCTION</scope>
    <scope>SUBCELLULAR LOCATION</scope>
    <scope>TISSUE SPECIFICITY</scope>
    <scope>INTERACTION WITH SPHK1</scope>
</reference>
<reference key="5">
    <citation type="journal article" date="2010" name="ChemBioChem">
        <title>Sphingosine kinase interacting protein is an A-kinase anchoring protein specific for type I cAMP-dependent protein kinase.</title>
        <authorList>
            <person name="Kovanich D."/>
            <person name="van der Heyden M.A."/>
            <person name="Aye T.T."/>
            <person name="van Veen T.A."/>
            <person name="Heck A.J."/>
            <person name="Scholten A."/>
        </authorList>
    </citation>
    <scope>FUNCTION</scope>
    <scope>TISSUE SPECIFICITY</scope>
    <scope>SUBCELLULAR LOCATION</scope>
    <scope>INTERACTION WITH TYPE I REGULATORY SUBUNIT OF PKA</scope>
    <scope>IDENTIFICATION BY MASS SPECTROMETRY</scope>
</reference>
<protein>
    <recommendedName>
        <fullName>A-kinase anchor protein SPHKAP</fullName>
    </recommendedName>
    <alternativeName>
        <fullName>SPHK1-interactor and AKAP domain-containing protein</fullName>
    </alternativeName>
    <alternativeName>
        <fullName>Sphingosine kinase type 1-interacting protein</fullName>
    </alternativeName>
</protein>
<sequence length="1700" mass="186456">MDGNSLLSVPSNLESSRMYDVLEPQQGRGCGSSGSGPGNSITACKKVLRSNSLLESTDYWLQNQRMPCQIGFVEDKSENCASVCFVNLDVNKDECSTEHLQQKLVNVSPDLPKLISSMNVQQPKENEIVVLSGLASGNLQADFEVSQCPWLPDICLVQCARGNRPNSTNCIIFEINKFLIGLELVQERQLHLETNILKLEDDTNCSLSSIEEDFLTASEHLEEESEVDESRNDYENINVSANVLESKQLKGATQVEWNCNKEKWLYALEDKYINKYPTPLIKTERSPENLTKNTALQSLDPSAKPSQWKREAVGNGRQATHYYHSEAFKGQMEKSQALYIPKDAYFSMMDKDVPSACAVAEQRSNLNPGDHEDTRNALPPRQDGEVTTGKYATNLAESVLQDAFIRLSQSQSTLPQESAVSVSVGSSLLPSCYSTKDTVVSRSWNELPKIVVVQSPDGSDAAPQPGISSWPEMEVSVETSSILSGENSSRQPQSALEVALACAATVIGTISSPQATERLKMEQVVSNFPPGSSGALQTQAPQGLKEPSINEYSFPSALCGMTQVASAVAVCGLGEREEVTCSVAPSGSLPPAAEASEAMPPLCGLASMELGKEAIAKGLLKEAALVLTRPNTYSSIGDFLDSMNRRIMETASKSQTLCSENVVRNELAHTLSNVILRHSIDEVHHKNMIIDPNDNRHSSEILDTLMESTNQLLLDVICFTFKKMSHIVRLGECPAVLSKETIRRRETEPSCQPSDPGASQAWTKATESSSSSPLSNSHNTSLVINNLVDGMYSKQDKGGVRPGLFKNPTLQSQLSRSHRVPDSSTATTSSKEIYLKGIAGEDTKSPHHSENECRASSEGQRSPTVSQSRSGSQEAEESIHPNTQEKYNCATSRINEVQVNLSLLGDDLLLPAQSTLQTKHPDIYCITDFAEELADTVVSMATEIAAICLDNSSGKQPWFCAWKRGSEFLMTPNVPCRSLKRKKESQGSGTAVRKHKPPRLSEIKRKTDEHPELKEKLMNRVVDESMNLEDVPDSVNLFANEVAAKIMNLTEFSMVDGMWQAQGYPRNRLLSGDRWSRLKASSCESIPEEDSEARAYVNSLGLMSTLSQPVSRASSVSKQSSCESITDEFSRFMVNQMENEGRGFELLLDYYAGKNASSILNSAMQQACRKSDHLSVRPSCPSKQSSTESITEEFYRYMLRDIERDSRESASSRRSSQDWTAGLLSPSLRSPVCHRQSSMPDSRSPCSRLTVNVPIKANSLDGFAQNCPQDFLSVQPVSSASSSGLCKSDSCLYRRGGTDHITNMLIHETWASSIEALMRKNKIIVDDAEEADTEPVSGGSPSQAEKCANRLAASRMCSGPTLLVQESLDCPRKDSVTECKQPPVSSLSKTASLTNHSPLDSKKETSSCQDPVPINHKRRSLCSREVPLIQIETDQREACAGEPEPFLSKSSLLEEAEGHSNDKNIPDVVRGGDTAVSACQIHSDSLDTRDVPEAEASTEARAPDEAPNPPSSSEESTGSWTQLANEEDNPDDTSSFLQLSERSMSNGNSSATSSLGIMDLDIYQESMPSSPMINELVEEKKILKGQSESTEAPASGPPTGTASPQRSLLVINFDLEPECPDAELRATLQWIAASELGIPTIYFKKSQENRIEKFLDVVQLVHRKSWKVGDIFHAVVQYCKMHEEQKDGRLSLFDWLLELG</sequence>
<gene>
    <name type="primary">SPHKAP</name>
    <name type="synonym">KIAA1678</name>
    <name type="synonym">SKIP</name>
</gene>
<accession>Q2M3C7</accession>
<accession>Q68DA3</accession>
<accession>Q68DR8</accession>
<accession>Q9C0I5</accession>
<feature type="chain" id="PRO_0000320666" description="A-kinase anchor protein SPHKAP">
    <location>
        <begin position="1"/>
        <end position="1700"/>
    </location>
</feature>
<feature type="region of interest" description="Disordered" evidence="3">
    <location>
        <begin position="364"/>
        <end position="385"/>
    </location>
</feature>
<feature type="region of interest" description="Disordered" evidence="3">
    <location>
        <begin position="742"/>
        <end position="778"/>
    </location>
</feature>
<feature type="region of interest" description="Disordered" evidence="3">
    <location>
        <begin position="793"/>
        <end position="885"/>
    </location>
</feature>
<feature type="region of interest" description="PKA-RII subunit binding domain" evidence="1">
    <location>
        <begin position="929"/>
        <end position="946"/>
    </location>
</feature>
<feature type="region of interest" description="Disordered" evidence="3">
    <location>
        <begin position="980"/>
        <end position="1006"/>
    </location>
</feature>
<feature type="region of interest" description="Disordered" evidence="3">
    <location>
        <begin position="1374"/>
        <end position="1414"/>
    </location>
</feature>
<feature type="region of interest" description="Disordered" evidence="3">
    <location>
        <begin position="1481"/>
        <end position="1535"/>
    </location>
</feature>
<feature type="region of interest" description="Disordered" evidence="3">
    <location>
        <begin position="1585"/>
        <end position="1604"/>
    </location>
</feature>
<feature type="compositionally biased region" description="Low complexity" evidence="3">
    <location>
        <begin position="768"/>
        <end position="778"/>
    </location>
</feature>
<feature type="compositionally biased region" description="Polar residues" evidence="3">
    <location>
        <begin position="822"/>
        <end position="831"/>
    </location>
</feature>
<feature type="compositionally biased region" description="Basic and acidic residues" evidence="3">
    <location>
        <begin position="839"/>
        <end position="855"/>
    </location>
</feature>
<feature type="compositionally biased region" description="Polar residues" evidence="3">
    <location>
        <begin position="857"/>
        <end position="873"/>
    </location>
</feature>
<feature type="compositionally biased region" description="Polar residues" evidence="3">
    <location>
        <begin position="1383"/>
        <end position="1398"/>
    </location>
</feature>
<feature type="compositionally biased region" description="Polar residues" evidence="3">
    <location>
        <begin position="1586"/>
        <end position="1604"/>
    </location>
</feature>
<feature type="modified residue" description="Phosphoserine" evidence="2">
    <location>
        <position position="1025"/>
    </location>
</feature>
<feature type="modified residue" description="Phosphoserine" evidence="2">
    <location>
        <position position="1085"/>
    </location>
</feature>
<feature type="modified residue" description="Phosphoserine" evidence="2">
    <location>
        <position position="1107"/>
    </location>
</feature>
<feature type="modified residue" description="Phosphoserine" evidence="2">
    <location>
        <position position="1120"/>
    </location>
</feature>
<feature type="modified residue" description="Phosphoserine" evidence="2">
    <location>
        <position position="1121"/>
    </location>
</feature>
<feature type="modified residue" description="Phosphoserine" evidence="2">
    <location>
        <position position="1124"/>
    </location>
</feature>
<feature type="modified residue" description="Phosphoserine" evidence="2">
    <location>
        <position position="1259"/>
    </location>
</feature>
<feature type="modified residue" description="Phosphoserine" evidence="2">
    <location>
        <position position="1288"/>
    </location>
</feature>
<feature type="splice variant" id="VSP_031712" description="In isoform 2." evidence="8 9">
    <location>
        <begin position="1546"/>
        <end position="1574"/>
    </location>
</feature>
<feature type="sequence variant" id="VAR_039263" description="In dbSNP:rs4283414.">
    <original>G</original>
    <variation>R</variation>
    <location>
        <position position="425"/>
    </location>
</feature>
<feature type="sequence variant" id="VAR_039264" description="In dbSNP:rs3811514." evidence="4 6">
    <original>K</original>
    <variation>E</variation>
    <location>
        <position position="617"/>
    </location>
</feature>
<feature type="sequence variant" id="VAR_039265" description="In dbSNP:rs3811515." evidence="4 6">
    <original>H</original>
    <variation>Q</variation>
    <location>
        <position position="847"/>
    </location>
</feature>
<feature type="sequence variant" id="VAR_039266" description="In dbSNP:rs3828161.">
    <original>Q</original>
    <variation>R</variation>
    <location>
        <position position="867"/>
    </location>
</feature>
<feature type="sequence variant" id="VAR_059113" description="In dbSNP:rs16824283.">
    <original>S</original>
    <variation>R</variation>
    <location>
        <position position="1603"/>
    </location>
</feature>
<feature type="sequence conflict" description="In Ref. 1; CAH18317." evidence="10" ref="1">
    <original>D</original>
    <variation>G</variation>
    <location>
        <position position="89"/>
    </location>
</feature>
<feature type="sequence conflict" description="In Ref. 1; CAH18317." evidence="10" ref="1">
    <original>L</original>
    <variation>P</variation>
    <location>
        <position position="483"/>
    </location>
</feature>
<feature type="sequence conflict" description="In Ref. 1; CAH18152." evidence="10" ref="1">
    <original>F</original>
    <variation>S</variation>
    <location>
        <position position="719"/>
    </location>
</feature>
<feature type="sequence conflict" description="In Ref. 1; CAH18152." evidence="10" ref="1">
    <original>P</original>
    <variation>L</variation>
    <location>
        <position position="921"/>
    </location>
</feature>
<feature type="sequence conflict" description="In Ref. 1; CAH18317." evidence="10" ref="1">
    <original>D</original>
    <variation>I</variation>
    <location>
        <position position="1218"/>
    </location>
</feature>
<dbReference type="EMBL" id="CR749297">
    <property type="protein sequence ID" value="CAH18152.1"/>
    <property type="status" value="ALT_INIT"/>
    <property type="molecule type" value="mRNA"/>
</dbReference>
<dbReference type="EMBL" id="CR749494">
    <property type="protein sequence ID" value="CAH18317.1"/>
    <property type="molecule type" value="mRNA"/>
</dbReference>
<dbReference type="EMBL" id="BC104954">
    <property type="protein sequence ID" value="AAI04955.1"/>
    <property type="molecule type" value="mRNA"/>
</dbReference>
<dbReference type="EMBL" id="BC104956">
    <property type="protein sequence ID" value="AAI04957.1"/>
    <property type="molecule type" value="mRNA"/>
</dbReference>
<dbReference type="EMBL" id="AB051465">
    <property type="protein sequence ID" value="BAB21769.1"/>
    <property type="molecule type" value="mRNA"/>
</dbReference>
<dbReference type="CCDS" id="CCDS33389.1">
    <molecule id="Q2M3C7-2"/>
</dbReference>
<dbReference type="CCDS" id="CCDS46537.1">
    <molecule id="Q2M3C7-1"/>
</dbReference>
<dbReference type="RefSeq" id="NP_001136116.1">
    <molecule id="Q2M3C7-1"/>
    <property type="nucleotide sequence ID" value="NM_001142644.2"/>
</dbReference>
<dbReference type="RefSeq" id="NP_085126.2">
    <molecule id="Q2M3C7-2"/>
    <property type="nucleotide sequence ID" value="NM_030623.4"/>
</dbReference>
<dbReference type="SMR" id="Q2M3C7"/>
<dbReference type="BioGRID" id="123222">
    <property type="interactions" value="9"/>
</dbReference>
<dbReference type="FunCoup" id="Q2M3C7">
    <property type="interactions" value="152"/>
</dbReference>
<dbReference type="IntAct" id="Q2M3C7">
    <property type="interactions" value="3"/>
</dbReference>
<dbReference type="STRING" id="9606.ENSP00000375909"/>
<dbReference type="GlyGen" id="Q2M3C7">
    <property type="glycosylation" value="1 site, 1 O-linked glycan (1 site)"/>
</dbReference>
<dbReference type="iPTMnet" id="Q2M3C7"/>
<dbReference type="PhosphoSitePlus" id="Q2M3C7"/>
<dbReference type="BioMuta" id="SPHKAP"/>
<dbReference type="DMDM" id="121941477"/>
<dbReference type="MassIVE" id="Q2M3C7"/>
<dbReference type="PaxDb" id="9606-ENSP00000375909"/>
<dbReference type="PeptideAtlas" id="Q2M3C7"/>
<dbReference type="ProteomicsDB" id="61371">
    <molecule id="Q2M3C7-1"/>
</dbReference>
<dbReference type="ProteomicsDB" id="61372">
    <molecule id="Q2M3C7-2"/>
</dbReference>
<dbReference type="Antibodypedia" id="54535">
    <property type="antibodies" value="40 antibodies from 15 providers"/>
</dbReference>
<dbReference type="DNASU" id="80309"/>
<dbReference type="Ensembl" id="ENST00000344657.5">
    <molecule id="Q2M3C7-2"/>
    <property type="protein sequence ID" value="ENSP00000339886.5"/>
    <property type="gene ID" value="ENSG00000153820.13"/>
</dbReference>
<dbReference type="Ensembl" id="ENST00000392056.8">
    <molecule id="Q2M3C7-1"/>
    <property type="protein sequence ID" value="ENSP00000375909.3"/>
    <property type="gene ID" value="ENSG00000153820.13"/>
</dbReference>
<dbReference type="GeneID" id="80309"/>
<dbReference type="KEGG" id="hsa:80309"/>
<dbReference type="MANE-Select" id="ENST00000392056.8">
    <property type="protein sequence ID" value="ENSP00000375909.3"/>
    <property type="RefSeq nucleotide sequence ID" value="NM_001142644.2"/>
    <property type="RefSeq protein sequence ID" value="NP_001136116.1"/>
</dbReference>
<dbReference type="UCSC" id="uc002vpp.3">
    <molecule id="Q2M3C7-1"/>
    <property type="organism name" value="human"/>
</dbReference>
<dbReference type="AGR" id="HGNC:30619"/>
<dbReference type="CTD" id="80309"/>
<dbReference type="DisGeNET" id="80309"/>
<dbReference type="GeneCards" id="SPHKAP"/>
<dbReference type="HGNC" id="HGNC:30619">
    <property type="gene designation" value="SPHKAP"/>
</dbReference>
<dbReference type="HPA" id="ENSG00000153820">
    <property type="expression patterns" value="Group enriched (brain, heart muscle)"/>
</dbReference>
<dbReference type="MIM" id="611646">
    <property type="type" value="gene"/>
</dbReference>
<dbReference type="neXtProt" id="NX_Q2M3C7"/>
<dbReference type="OpenTargets" id="ENSG00000153820"/>
<dbReference type="PharmGKB" id="PA162404477"/>
<dbReference type="VEuPathDB" id="HostDB:ENSG00000153820"/>
<dbReference type="eggNOG" id="ENOG502QQ6Q">
    <property type="taxonomic scope" value="Eukaryota"/>
</dbReference>
<dbReference type="GeneTree" id="ENSGT00940000153313"/>
<dbReference type="HOGENOM" id="CLU_243215_0_0_1"/>
<dbReference type="InParanoid" id="Q2M3C7"/>
<dbReference type="OMA" id="VNVFANE"/>
<dbReference type="OrthoDB" id="6154436at2759"/>
<dbReference type="PAN-GO" id="Q2M3C7">
    <property type="GO annotations" value="3 GO annotations based on evolutionary models"/>
</dbReference>
<dbReference type="PhylomeDB" id="Q2M3C7"/>
<dbReference type="TreeFam" id="TF105426"/>
<dbReference type="PathwayCommons" id="Q2M3C7"/>
<dbReference type="SignaLink" id="Q2M3C7"/>
<dbReference type="BioGRID-ORCS" id="80309">
    <property type="hits" value="8 hits in 1145 CRISPR screens"/>
</dbReference>
<dbReference type="ChiTaRS" id="SPHKAP">
    <property type="organism name" value="human"/>
</dbReference>
<dbReference type="GenomeRNAi" id="80309"/>
<dbReference type="Pharos" id="Q2M3C7">
    <property type="development level" value="Tdark"/>
</dbReference>
<dbReference type="PRO" id="PR:Q2M3C7"/>
<dbReference type="Proteomes" id="UP000005640">
    <property type="component" value="Chromosome 2"/>
</dbReference>
<dbReference type="RNAct" id="Q2M3C7">
    <property type="molecule type" value="protein"/>
</dbReference>
<dbReference type="Bgee" id="ENSG00000153820">
    <property type="expression patterns" value="Expressed in left ventricle myocardium and 90 other cell types or tissues"/>
</dbReference>
<dbReference type="GO" id="GO:0005737">
    <property type="term" value="C:cytoplasm"/>
    <property type="evidence" value="ECO:0000318"/>
    <property type="project" value="GO_Central"/>
</dbReference>
<dbReference type="GO" id="GO:0005739">
    <property type="term" value="C:mitochondrion"/>
    <property type="evidence" value="ECO:0000318"/>
    <property type="project" value="GO_Central"/>
</dbReference>
<dbReference type="GO" id="GO:0051018">
    <property type="term" value="F:protein kinase A binding"/>
    <property type="evidence" value="ECO:0000314"/>
    <property type="project" value="UniProtKB"/>
</dbReference>
<dbReference type="InterPro" id="IPR018292">
    <property type="entry name" value="AKAP_110_C"/>
</dbReference>
<dbReference type="InterPro" id="IPR008382">
    <property type="entry name" value="SPHK1-interactor_AKAP_110"/>
</dbReference>
<dbReference type="PANTHER" id="PTHR10226">
    <property type="entry name" value="A KINASE ANCHOR PROTEIN"/>
    <property type="match status" value="1"/>
</dbReference>
<dbReference type="PANTHER" id="PTHR10226:SF7">
    <property type="entry name" value="A-KINASE ANCHOR PROTEIN SPHKAP"/>
    <property type="match status" value="1"/>
</dbReference>
<dbReference type="Pfam" id="PF05716">
    <property type="entry name" value="AKAP_110"/>
    <property type="match status" value="1"/>
</dbReference>
<keyword id="KW-0025">Alternative splicing</keyword>
<keyword id="KW-0963">Cytoplasm</keyword>
<keyword id="KW-0597">Phosphoprotein</keyword>
<keyword id="KW-1267">Proteomics identification</keyword>
<keyword id="KW-1185">Reference proteome</keyword>
<name>SPKAP_HUMAN</name>